<proteinExistence type="inferred from homology"/>
<organism>
    <name type="scientific">Escherichia coli O157:H7</name>
    <dbReference type="NCBI Taxonomy" id="83334"/>
    <lineage>
        <taxon>Bacteria</taxon>
        <taxon>Pseudomonadati</taxon>
        <taxon>Pseudomonadota</taxon>
        <taxon>Gammaproteobacteria</taxon>
        <taxon>Enterobacterales</taxon>
        <taxon>Enterobacteriaceae</taxon>
        <taxon>Escherichia</taxon>
    </lineage>
</organism>
<evidence type="ECO:0000255" key="1">
    <source>
        <dbReference type="HAMAP-Rule" id="MF_01038"/>
    </source>
</evidence>
<keyword id="KW-0324">Glycolysis</keyword>
<keyword id="KW-0413">Isomerase</keyword>
<keyword id="KW-0464">Manganese</keyword>
<keyword id="KW-0479">Metal-binding</keyword>
<keyword id="KW-1185">Reference proteome</keyword>
<protein>
    <recommendedName>
        <fullName evidence="1">2,3-bisphosphoglycerate-independent phosphoglycerate mutase</fullName>
        <shortName evidence="1">BPG-independent PGAM</shortName>
        <shortName evidence="1">Phosphoglyceromutase</shortName>
        <shortName evidence="1">iPGM</shortName>
        <ecNumber evidence="1">5.4.2.12</ecNumber>
    </recommendedName>
</protein>
<accession>Q8XDE9</accession>
<dbReference type="EC" id="5.4.2.12" evidence="1"/>
<dbReference type="EMBL" id="AE005174">
    <property type="protein sequence ID" value="AAG58759.1"/>
    <property type="molecule type" value="Genomic_DNA"/>
</dbReference>
<dbReference type="EMBL" id="BA000007">
    <property type="protein sequence ID" value="BAB37913.1"/>
    <property type="molecule type" value="Genomic_DNA"/>
</dbReference>
<dbReference type="PIR" id="B91190">
    <property type="entry name" value="B91190"/>
</dbReference>
<dbReference type="PIR" id="C86037">
    <property type="entry name" value="C86037"/>
</dbReference>
<dbReference type="SMR" id="Q8XDE9"/>
<dbReference type="STRING" id="155864.Z5039"/>
<dbReference type="KEGG" id="ece:Z5039"/>
<dbReference type="KEGG" id="ecs:ECs_4490"/>
<dbReference type="PATRIC" id="fig|386585.9.peg.4706"/>
<dbReference type="eggNOG" id="COG0696">
    <property type="taxonomic scope" value="Bacteria"/>
</dbReference>
<dbReference type="HOGENOM" id="CLU_026099_2_0_6"/>
<dbReference type="OMA" id="FMDGRDT"/>
<dbReference type="UniPathway" id="UPA00109">
    <property type="reaction ID" value="UER00186"/>
</dbReference>
<dbReference type="Proteomes" id="UP000000558">
    <property type="component" value="Chromosome"/>
</dbReference>
<dbReference type="Proteomes" id="UP000002519">
    <property type="component" value="Chromosome"/>
</dbReference>
<dbReference type="GO" id="GO:0005829">
    <property type="term" value="C:cytosol"/>
    <property type="evidence" value="ECO:0007669"/>
    <property type="project" value="TreeGrafter"/>
</dbReference>
<dbReference type="GO" id="GO:0030145">
    <property type="term" value="F:manganese ion binding"/>
    <property type="evidence" value="ECO:0007669"/>
    <property type="project" value="UniProtKB-UniRule"/>
</dbReference>
<dbReference type="GO" id="GO:0004619">
    <property type="term" value="F:phosphoglycerate mutase activity"/>
    <property type="evidence" value="ECO:0007669"/>
    <property type="project" value="UniProtKB-EC"/>
</dbReference>
<dbReference type="GO" id="GO:0006007">
    <property type="term" value="P:glucose catabolic process"/>
    <property type="evidence" value="ECO:0007669"/>
    <property type="project" value="InterPro"/>
</dbReference>
<dbReference type="GO" id="GO:0006096">
    <property type="term" value="P:glycolytic process"/>
    <property type="evidence" value="ECO:0007669"/>
    <property type="project" value="UniProtKB-UniRule"/>
</dbReference>
<dbReference type="CDD" id="cd16010">
    <property type="entry name" value="iPGM"/>
    <property type="match status" value="1"/>
</dbReference>
<dbReference type="FunFam" id="3.40.1450.10:FF:000001">
    <property type="entry name" value="2,3-bisphosphoglycerate-independent phosphoglycerate mutase"/>
    <property type="match status" value="1"/>
</dbReference>
<dbReference type="FunFam" id="3.40.720.10:FF:000001">
    <property type="entry name" value="2,3-bisphosphoglycerate-independent phosphoglycerate mutase"/>
    <property type="match status" value="1"/>
</dbReference>
<dbReference type="Gene3D" id="3.40.720.10">
    <property type="entry name" value="Alkaline Phosphatase, subunit A"/>
    <property type="match status" value="1"/>
</dbReference>
<dbReference type="Gene3D" id="3.40.1450.10">
    <property type="entry name" value="BPG-independent phosphoglycerate mutase, domain B"/>
    <property type="match status" value="1"/>
</dbReference>
<dbReference type="HAMAP" id="MF_01038">
    <property type="entry name" value="GpmI"/>
    <property type="match status" value="1"/>
</dbReference>
<dbReference type="InterPro" id="IPR017850">
    <property type="entry name" value="Alkaline_phosphatase_core_sf"/>
</dbReference>
<dbReference type="InterPro" id="IPR011258">
    <property type="entry name" value="BPG-indep_PGM_N"/>
</dbReference>
<dbReference type="InterPro" id="IPR006124">
    <property type="entry name" value="Metalloenzyme"/>
</dbReference>
<dbReference type="InterPro" id="IPR036646">
    <property type="entry name" value="PGAM_B_sf"/>
</dbReference>
<dbReference type="InterPro" id="IPR005995">
    <property type="entry name" value="Pgm_bpd_ind"/>
</dbReference>
<dbReference type="NCBIfam" id="TIGR01307">
    <property type="entry name" value="pgm_bpd_ind"/>
    <property type="match status" value="1"/>
</dbReference>
<dbReference type="NCBIfam" id="NF003897">
    <property type="entry name" value="PRK05434.1-5"/>
    <property type="match status" value="1"/>
</dbReference>
<dbReference type="PANTHER" id="PTHR31637">
    <property type="entry name" value="2,3-BISPHOSPHOGLYCERATE-INDEPENDENT PHOSPHOGLYCERATE MUTASE"/>
    <property type="match status" value="1"/>
</dbReference>
<dbReference type="PANTHER" id="PTHR31637:SF0">
    <property type="entry name" value="2,3-BISPHOSPHOGLYCERATE-INDEPENDENT PHOSPHOGLYCERATE MUTASE"/>
    <property type="match status" value="1"/>
</dbReference>
<dbReference type="Pfam" id="PF06415">
    <property type="entry name" value="iPGM_N"/>
    <property type="match status" value="1"/>
</dbReference>
<dbReference type="Pfam" id="PF01676">
    <property type="entry name" value="Metalloenzyme"/>
    <property type="match status" value="1"/>
</dbReference>
<dbReference type="PIRSF" id="PIRSF001492">
    <property type="entry name" value="IPGAM"/>
    <property type="match status" value="1"/>
</dbReference>
<dbReference type="SUPFAM" id="SSF64158">
    <property type="entry name" value="2,3-Bisphosphoglycerate-independent phosphoglycerate mutase, substrate-binding domain"/>
    <property type="match status" value="1"/>
</dbReference>
<dbReference type="SUPFAM" id="SSF53649">
    <property type="entry name" value="Alkaline phosphatase-like"/>
    <property type="match status" value="1"/>
</dbReference>
<name>GPMI_ECO57</name>
<reference key="1">
    <citation type="journal article" date="2001" name="Nature">
        <title>Genome sequence of enterohaemorrhagic Escherichia coli O157:H7.</title>
        <authorList>
            <person name="Perna N.T."/>
            <person name="Plunkett G. III"/>
            <person name="Burland V."/>
            <person name="Mau B."/>
            <person name="Glasner J.D."/>
            <person name="Rose D.J."/>
            <person name="Mayhew G.F."/>
            <person name="Evans P.S."/>
            <person name="Gregor J."/>
            <person name="Kirkpatrick H.A."/>
            <person name="Posfai G."/>
            <person name="Hackett J."/>
            <person name="Klink S."/>
            <person name="Boutin A."/>
            <person name="Shao Y."/>
            <person name="Miller L."/>
            <person name="Grotbeck E.J."/>
            <person name="Davis N.W."/>
            <person name="Lim A."/>
            <person name="Dimalanta E.T."/>
            <person name="Potamousis K."/>
            <person name="Apodaca J."/>
            <person name="Anantharaman T.S."/>
            <person name="Lin J."/>
            <person name="Yen G."/>
            <person name="Schwartz D.C."/>
            <person name="Welch R.A."/>
            <person name="Blattner F.R."/>
        </authorList>
    </citation>
    <scope>NUCLEOTIDE SEQUENCE [LARGE SCALE GENOMIC DNA]</scope>
    <source>
        <strain>O157:H7 / EDL933 / ATCC 700927 / EHEC</strain>
    </source>
</reference>
<reference key="2">
    <citation type="journal article" date="2001" name="DNA Res.">
        <title>Complete genome sequence of enterohemorrhagic Escherichia coli O157:H7 and genomic comparison with a laboratory strain K-12.</title>
        <authorList>
            <person name="Hayashi T."/>
            <person name="Makino K."/>
            <person name="Ohnishi M."/>
            <person name="Kurokawa K."/>
            <person name="Ishii K."/>
            <person name="Yokoyama K."/>
            <person name="Han C.-G."/>
            <person name="Ohtsubo E."/>
            <person name="Nakayama K."/>
            <person name="Murata T."/>
            <person name="Tanaka M."/>
            <person name="Tobe T."/>
            <person name="Iida T."/>
            <person name="Takami H."/>
            <person name="Honda T."/>
            <person name="Sasakawa C."/>
            <person name="Ogasawara N."/>
            <person name="Yasunaga T."/>
            <person name="Kuhara S."/>
            <person name="Shiba T."/>
            <person name="Hattori M."/>
            <person name="Shinagawa H."/>
        </authorList>
    </citation>
    <scope>NUCLEOTIDE SEQUENCE [LARGE SCALE GENOMIC DNA]</scope>
    <source>
        <strain>O157:H7 / Sakai / RIMD 0509952 / EHEC</strain>
    </source>
</reference>
<sequence>MSVSKKPMVLVILDGYGYREEQQDNAIFSAKTPVMDALWANRPHTLIDASGLEVGLPDRQMGNSEVGHVNLGAGRIVYQDLTRLDVEIKDRAFFANPVLTGAVDKAKNAGKAVHIMGLLSAGGVHSHEDHIMAMVELAAERGAEKIYLHAFLDGRDTPPRSAESSLKKFEEKFAALGKGRVASIIGRYYAMDRDNRWDRVEKAYDLLTLAQGEFQADTAVAGLQAAYARDENDEFVKATVIRAEGQPDAAMEDGDALIFMNFRADRAREITRAFVNADFDGFARKKVVNVDFVMLTEYAADIKTAVAYPPASLVNTFGEWMAKNDKTQLRISETEKYAHVTFFFNGGVEESFKGEDRILINSPKVATYDLQPEMSSAELTEKLVAAIKSGKYDTIICNYPNGDMVGHTGVMEAAVKAVEALDHCVEEVAKAVESVGGQLLITADHGNAEQMRDPATGQAHTAHTNLPVPLIYVGDKNVKAVAGGKLSDIAPTMLSLMGMEIPQEMTGKPLFIVE</sequence>
<feature type="chain" id="PRO_0000212146" description="2,3-bisphosphoglycerate-independent phosphoglycerate mutase">
    <location>
        <begin position="1"/>
        <end position="514"/>
    </location>
</feature>
<feature type="active site" description="Phosphoserine intermediate" evidence="1">
    <location>
        <position position="64"/>
    </location>
</feature>
<feature type="binding site" evidence="1">
    <location>
        <position position="14"/>
    </location>
    <ligand>
        <name>Mn(2+)</name>
        <dbReference type="ChEBI" id="CHEBI:29035"/>
        <label>2</label>
    </ligand>
</feature>
<feature type="binding site" evidence="1">
    <location>
        <position position="64"/>
    </location>
    <ligand>
        <name>Mn(2+)</name>
        <dbReference type="ChEBI" id="CHEBI:29035"/>
        <label>2</label>
    </ligand>
</feature>
<feature type="binding site" evidence="1">
    <location>
        <position position="125"/>
    </location>
    <ligand>
        <name>substrate</name>
    </ligand>
</feature>
<feature type="binding site" evidence="1">
    <location>
        <begin position="155"/>
        <end position="156"/>
    </location>
    <ligand>
        <name>substrate</name>
    </ligand>
</feature>
<feature type="binding site" evidence="1">
    <location>
        <position position="187"/>
    </location>
    <ligand>
        <name>substrate</name>
    </ligand>
</feature>
<feature type="binding site" evidence="1">
    <location>
        <position position="193"/>
    </location>
    <ligand>
        <name>substrate</name>
    </ligand>
</feature>
<feature type="binding site" evidence="1">
    <location>
        <begin position="263"/>
        <end position="266"/>
    </location>
    <ligand>
        <name>substrate</name>
    </ligand>
</feature>
<feature type="binding site" evidence="1">
    <location>
        <position position="336"/>
    </location>
    <ligand>
        <name>substrate</name>
    </ligand>
</feature>
<feature type="binding site" evidence="1">
    <location>
        <position position="403"/>
    </location>
    <ligand>
        <name>Mn(2+)</name>
        <dbReference type="ChEBI" id="CHEBI:29035"/>
        <label>1</label>
    </ligand>
</feature>
<feature type="binding site" evidence="1">
    <location>
        <position position="407"/>
    </location>
    <ligand>
        <name>Mn(2+)</name>
        <dbReference type="ChEBI" id="CHEBI:29035"/>
        <label>1</label>
    </ligand>
</feature>
<feature type="binding site" evidence="1">
    <location>
        <position position="444"/>
    </location>
    <ligand>
        <name>Mn(2+)</name>
        <dbReference type="ChEBI" id="CHEBI:29035"/>
        <label>2</label>
    </ligand>
</feature>
<feature type="binding site" evidence="1">
    <location>
        <position position="445"/>
    </location>
    <ligand>
        <name>Mn(2+)</name>
        <dbReference type="ChEBI" id="CHEBI:29035"/>
        <label>2</label>
    </ligand>
</feature>
<feature type="binding site" evidence="1">
    <location>
        <position position="463"/>
    </location>
    <ligand>
        <name>Mn(2+)</name>
        <dbReference type="ChEBI" id="CHEBI:29035"/>
        <label>1</label>
    </ligand>
</feature>
<gene>
    <name evidence="1" type="primary">gpmI</name>
    <name type="ordered locus">Z5039</name>
    <name type="ordered locus">ECs4490</name>
</gene>
<comment type="function">
    <text evidence="1">Catalyzes the interconversion of 2-phosphoglycerate and 3-phosphoglycerate.</text>
</comment>
<comment type="catalytic activity">
    <reaction evidence="1">
        <text>(2R)-2-phosphoglycerate = (2R)-3-phosphoglycerate</text>
        <dbReference type="Rhea" id="RHEA:15901"/>
        <dbReference type="ChEBI" id="CHEBI:58272"/>
        <dbReference type="ChEBI" id="CHEBI:58289"/>
        <dbReference type="EC" id="5.4.2.12"/>
    </reaction>
</comment>
<comment type="cofactor">
    <cofactor evidence="1">
        <name>Mn(2+)</name>
        <dbReference type="ChEBI" id="CHEBI:29035"/>
    </cofactor>
    <text evidence="1">Binds 2 manganese ions per subunit.</text>
</comment>
<comment type="pathway">
    <text evidence="1">Carbohydrate degradation; glycolysis; pyruvate from D-glyceraldehyde 3-phosphate: step 3/5.</text>
</comment>
<comment type="subunit">
    <text evidence="1">Monomer.</text>
</comment>
<comment type="similarity">
    <text evidence="1">Belongs to the BPG-independent phosphoglycerate mutase family.</text>
</comment>